<accession>B9KF13</accession>
<reference key="1">
    <citation type="journal article" date="2008" name="Foodborne Pathog. Dis.">
        <title>The complete genome sequence and analysis of the human pathogen Campylobacter lari.</title>
        <authorList>
            <person name="Miller W.G."/>
            <person name="Wang G."/>
            <person name="Binnewies T.T."/>
            <person name="Parker C.T."/>
        </authorList>
    </citation>
    <scope>NUCLEOTIDE SEQUENCE [LARGE SCALE GENOMIC DNA]</scope>
    <source>
        <strain>RM2100 / D67 / ATCC BAA-1060</strain>
    </source>
</reference>
<feature type="chain" id="PRO_1000164777" description="Acyl carrier protein">
    <location>
        <begin position="1"/>
        <end position="77"/>
    </location>
</feature>
<feature type="domain" description="Carrier" evidence="2">
    <location>
        <begin position="1"/>
        <end position="76"/>
    </location>
</feature>
<feature type="modified residue" description="O-(pantetheine 4'-phosphoryl)serine" evidence="2">
    <location>
        <position position="36"/>
    </location>
</feature>
<organism>
    <name type="scientific">Campylobacter lari (strain RM2100 / D67 / ATCC BAA-1060)</name>
    <dbReference type="NCBI Taxonomy" id="306263"/>
    <lineage>
        <taxon>Bacteria</taxon>
        <taxon>Pseudomonadati</taxon>
        <taxon>Campylobacterota</taxon>
        <taxon>Epsilonproteobacteria</taxon>
        <taxon>Campylobacterales</taxon>
        <taxon>Campylobacteraceae</taxon>
        <taxon>Campylobacter</taxon>
    </lineage>
</organism>
<sequence length="77" mass="8711">MAIFDDVKKVVVEQLSVDEDVVKMESKIIEDLGADSLDVVELVMALEEKFDVEIPDSDAEKLVKIEDVVNYIENLQK</sequence>
<gene>
    <name evidence="1" type="primary">acpP</name>
    <name type="ordered locus">Cla_0285</name>
</gene>
<keyword id="KW-0963">Cytoplasm</keyword>
<keyword id="KW-0275">Fatty acid biosynthesis</keyword>
<keyword id="KW-0276">Fatty acid metabolism</keyword>
<keyword id="KW-0444">Lipid biosynthesis</keyword>
<keyword id="KW-0443">Lipid metabolism</keyword>
<keyword id="KW-0596">Phosphopantetheine</keyword>
<keyword id="KW-0597">Phosphoprotein</keyword>
<keyword id="KW-1185">Reference proteome</keyword>
<comment type="function">
    <text evidence="1">Carrier of the growing fatty acid chain in fatty acid biosynthesis.</text>
</comment>
<comment type="pathway">
    <text evidence="1">Lipid metabolism; fatty acid biosynthesis.</text>
</comment>
<comment type="subcellular location">
    <subcellularLocation>
        <location evidence="1">Cytoplasm</location>
    </subcellularLocation>
</comment>
<comment type="PTM">
    <text evidence="1">4'-phosphopantetheine is transferred from CoA to a specific serine of apo-ACP by AcpS. This modification is essential for activity because fatty acids are bound in thioester linkage to the sulfhydryl of the prosthetic group.</text>
</comment>
<comment type="similarity">
    <text evidence="1">Belongs to the acyl carrier protein (ACP) family.</text>
</comment>
<evidence type="ECO:0000255" key="1">
    <source>
        <dbReference type="HAMAP-Rule" id="MF_01217"/>
    </source>
</evidence>
<evidence type="ECO:0000255" key="2">
    <source>
        <dbReference type="PROSITE-ProRule" id="PRU00258"/>
    </source>
</evidence>
<dbReference type="EMBL" id="CP000932">
    <property type="protein sequence ID" value="ACM63648.1"/>
    <property type="molecule type" value="Genomic_DNA"/>
</dbReference>
<dbReference type="RefSeq" id="WP_012661032.1">
    <property type="nucleotide sequence ID" value="NC_012039.1"/>
</dbReference>
<dbReference type="SMR" id="B9KF13"/>
<dbReference type="STRING" id="306263.Cla_0285"/>
<dbReference type="KEGG" id="cla:CLA_0285"/>
<dbReference type="PATRIC" id="fig|306263.5.peg.283"/>
<dbReference type="eggNOG" id="COG0236">
    <property type="taxonomic scope" value="Bacteria"/>
</dbReference>
<dbReference type="HOGENOM" id="CLU_108696_5_1_7"/>
<dbReference type="UniPathway" id="UPA00094"/>
<dbReference type="Proteomes" id="UP000007727">
    <property type="component" value="Chromosome"/>
</dbReference>
<dbReference type="GO" id="GO:0005829">
    <property type="term" value="C:cytosol"/>
    <property type="evidence" value="ECO:0007669"/>
    <property type="project" value="TreeGrafter"/>
</dbReference>
<dbReference type="GO" id="GO:0016020">
    <property type="term" value="C:membrane"/>
    <property type="evidence" value="ECO:0007669"/>
    <property type="project" value="GOC"/>
</dbReference>
<dbReference type="GO" id="GO:0000035">
    <property type="term" value="F:acyl binding"/>
    <property type="evidence" value="ECO:0007669"/>
    <property type="project" value="TreeGrafter"/>
</dbReference>
<dbReference type="GO" id="GO:0000036">
    <property type="term" value="F:acyl carrier activity"/>
    <property type="evidence" value="ECO:0007669"/>
    <property type="project" value="UniProtKB-UniRule"/>
</dbReference>
<dbReference type="GO" id="GO:0009245">
    <property type="term" value="P:lipid A biosynthetic process"/>
    <property type="evidence" value="ECO:0007669"/>
    <property type="project" value="TreeGrafter"/>
</dbReference>
<dbReference type="Gene3D" id="1.10.1200.10">
    <property type="entry name" value="ACP-like"/>
    <property type="match status" value="1"/>
</dbReference>
<dbReference type="HAMAP" id="MF_01217">
    <property type="entry name" value="Acyl_carrier"/>
    <property type="match status" value="1"/>
</dbReference>
<dbReference type="InterPro" id="IPR003231">
    <property type="entry name" value="ACP"/>
</dbReference>
<dbReference type="InterPro" id="IPR036736">
    <property type="entry name" value="ACP-like_sf"/>
</dbReference>
<dbReference type="InterPro" id="IPR009081">
    <property type="entry name" value="PP-bd_ACP"/>
</dbReference>
<dbReference type="InterPro" id="IPR006162">
    <property type="entry name" value="Ppantetheine_attach_site"/>
</dbReference>
<dbReference type="NCBIfam" id="TIGR00517">
    <property type="entry name" value="acyl_carrier"/>
    <property type="match status" value="1"/>
</dbReference>
<dbReference type="NCBIfam" id="NF002148">
    <property type="entry name" value="PRK00982.1-2"/>
    <property type="match status" value="1"/>
</dbReference>
<dbReference type="NCBIfam" id="NF002150">
    <property type="entry name" value="PRK00982.1-4"/>
    <property type="match status" value="1"/>
</dbReference>
<dbReference type="PANTHER" id="PTHR20863">
    <property type="entry name" value="ACYL CARRIER PROTEIN"/>
    <property type="match status" value="1"/>
</dbReference>
<dbReference type="PANTHER" id="PTHR20863:SF76">
    <property type="entry name" value="CARRIER DOMAIN-CONTAINING PROTEIN"/>
    <property type="match status" value="1"/>
</dbReference>
<dbReference type="Pfam" id="PF00550">
    <property type="entry name" value="PP-binding"/>
    <property type="match status" value="1"/>
</dbReference>
<dbReference type="SUPFAM" id="SSF47336">
    <property type="entry name" value="ACP-like"/>
    <property type="match status" value="1"/>
</dbReference>
<dbReference type="PROSITE" id="PS50075">
    <property type="entry name" value="CARRIER"/>
    <property type="match status" value="1"/>
</dbReference>
<dbReference type="PROSITE" id="PS00012">
    <property type="entry name" value="PHOSPHOPANTETHEINE"/>
    <property type="match status" value="1"/>
</dbReference>
<protein>
    <recommendedName>
        <fullName evidence="1">Acyl carrier protein</fullName>
        <shortName evidence="1">ACP</shortName>
    </recommendedName>
</protein>
<proteinExistence type="inferred from homology"/>
<name>ACP_CAMLR</name>